<protein>
    <recommendedName>
        <fullName evidence="1">Mycothiol acetyltransferase</fullName>
        <shortName evidence="1">MSH acetyltransferase</shortName>
        <ecNumber evidence="1">2.3.1.189</ecNumber>
    </recommendedName>
    <alternativeName>
        <fullName evidence="1">Mycothiol synthase</fullName>
    </alternativeName>
</protein>
<gene>
    <name evidence="1" type="primary">mshD</name>
    <name type="ordered locus">Noca_4248</name>
</gene>
<feature type="chain" id="PRO_0000400286" description="Mycothiol acetyltransferase">
    <location>
        <begin position="1"/>
        <end position="295"/>
    </location>
</feature>
<feature type="domain" description="N-acetyltransferase" evidence="1">
    <location>
        <begin position="137"/>
        <end position="295"/>
    </location>
</feature>
<feature type="binding site" evidence="1">
    <location>
        <position position="30"/>
    </location>
    <ligand>
        <name>1D-myo-inositol 2-(L-cysteinylamino)-2-deoxy-alpha-D-glucopyranoside</name>
        <dbReference type="ChEBI" id="CHEBI:58887"/>
    </ligand>
</feature>
<feature type="binding site" evidence="1">
    <location>
        <begin position="62"/>
        <end position="64"/>
    </location>
    <ligand>
        <name>acetyl-CoA</name>
        <dbReference type="ChEBI" id="CHEBI:57288"/>
        <label>1</label>
    </ligand>
</feature>
<feature type="binding site" evidence="1">
    <location>
        <position position="165"/>
    </location>
    <ligand>
        <name>1D-myo-inositol 2-(L-cysteinylamino)-2-deoxy-alpha-D-glucopyranoside</name>
        <dbReference type="ChEBI" id="CHEBI:58887"/>
    </ligand>
</feature>
<feature type="binding site" evidence="1">
    <location>
        <position position="209"/>
    </location>
    <ligand>
        <name>1D-myo-inositol 2-(L-cysteinylamino)-2-deoxy-alpha-D-glucopyranoside</name>
        <dbReference type="ChEBI" id="CHEBI:58887"/>
    </ligand>
</feature>
<feature type="binding site" evidence="1">
    <location>
        <position position="227"/>
    </location>
    <ligand>
        <name>1D-myo-inositol 2-(L-cysteinylamino)-2-deoxy-alpha-D-glucopyranoside</name>
        <dbReference type="ChEBI" id="CHEBI:58887"/>
    </ligand>
</feature>
<feature type="binding site" evidence="1">
    <location>
        <begin position="231"/>
        <end position="233"/>
    </location>
    <ligand>
        <name>acetyl-CoA</name>
        <dbReference type="ChEBI" id="CHEBI:57288"/>
        <label>2</label>
    </ligand>
</feature>
<feature type="binding site" evidence="1">
    <location>
        <begin position="238"/>
        <end position="244"/>
    </location>
    <ligand>
        <name>acetyl-CoA</name>
        <dbReference type="ChEBI" id="CHEBI:57288"/>
        <label>2</label>
    </ligand>
</feature>
<feature type="binding site" evidence="1">
    <location>
        <position position="265"/>
    </location>
    <ligand>
        <name>1D-myo-inositol 2-(L-cysteinylamino)-2-deoxy-alpha-D-glucopyranoside</name>
        <dbReference type="ChEBI" id="CHEBI:58887"/>
    </ligand>
</feature>
<dbReference type="EC" id="2.3.1.189" evidence="1"/>
<dbReference type="EMBL" id="CP000509">
    <property type="protein sequence ID" value="ABL83745.1"/>
    <property type="molecule type" value="Genomic_DNA"/>
</dbReference>
<dbReference type="RefSeq" id="WP_011757674.1">
    <property type="nucleotide sequence ID" value="NC_008699.1"/>
</dbReference>
<dbReference type="SMR" id="A1SPL0"/>
<dbReference type="STRING" id="196162.Noca_4248"/>
<dbReference type="KEGG" id="nca:Noca_4248"/>
<dbReference type="eggNOG" id="COG0454">
    <property type="taxonomic scope" value="Bacteria"/>
</dbReference>
<dbReference type="eggNOG" id="COG0456">
    <property type="taxonomic scope" value="Bacteria"/>
</dbReference>
<dbReference type="HOGENOM" id="CLU_068014_0_0_11"/>
<dbReference type="OrthoDB" id="3208058at2"/>
<dbReference type="Proteomes" id="UP000000640">
    <property type="component" value="Chromosome"/>
</dbReference>
<dbReference type="GO" id="GO:0035447">
    <property type="term" value="F:mycothiol synthase activity"/>
    <property type="evidence" value="ECO:0007669"/>
    <property type="project" value="UniProtKB-UniRule"/>
</dbReference>
<dbReference type="GO" id="GO:0008999">
    <property type="term" value="F:protein-N-terminal-alanine acetyltransferase activity"/>
    <property type="evidence" value="ECO:0007669"/>
    <property type="project" value="TreeGrafter"/>
</dbReference>
<dbReference type="GO" id="GO:0010125">
    <property type="term" value="P:mycothiol biosynthetic process"/>
    <property type="evidence" value="ECO:0007669"/>
    <property type="project" value="UniProtKB-UniRule"/>
</dbReference>
<dbReference type="Gene3D" id="3.40.630.30">
    <property type="match status" value="1"/>
</dbReference>
<dbReference type="HAMAP" id="MF_01698">
    <property type="entry name" value="MshD"/>
    <property type="match status" value="1"/>
</dbReference>
<dbReference type="InterPro" id="IPR016181">
    <property type="entry name" value="Acyl_CoA_acyltransferase"/>
</dbReference>
<dbReference type="InterPro" id="IPR000182">
    <property type="entry name" value="GNAT_dom"/>
</dbReference>
<dbReference type="InterPro" id="IPR050276">
    <property type="entry name" value="MshD_Acetyltransferase"/>
</dbReference>
<dbReference type="InterPro" id="IPR017813">
    <property type="entry name" value="Mycothiol_AcTrfase"/>
</dbReference>
<dbReference type="NCBIfam" id="TIGR03448">
    <property type="entry name" value="mycothiol_MshD"/>
    <property type="match status" value="1"/>
</dbReference>
<dbReference type="PANTHER" id="PTHR43617">
    <property type="entry name" value="L-AMINO ACID N-ACETYLTRANSFERASE"/>
    <property type="match status" value="1"/>
</dbReference>
<dbReference type="PANTHER" id="PTHR43617:SF31">
    <property type="entry name" value="MYCOTHIOL ACETYLTRANSFERASE"/>
    <property type="match status" value="1"/>
</dbReference>
<dbReference type="Pfam" id="PF00583">
    <property type="entry name" value="Acetyltransf_1"/>
    <property type="match status" value="1"/>
</dbReference>
<dbReference type="PIRSF" id="PIRSF021524">
    <property type="entry name" value="MSH_acetyltransferase"/>
    <property type="match status" value="1"/>
</dbReference>
<dbReference type="SUPFAM" id="SSF55729">
    <property type="entry name" value="Acyl-CoA N-acyltransferases (Nat)"/>
    <property type="match status" value="1"/>
</dbReference>
<dbReference type="PROSITE" id="PS51186">
    <property type="entry name" value="GNAT"/>
    <property type="match status" value="1"/>
</dbReference>
<organism>
    <name type="scientific">Nocardioides sp. (strain ATCC BAA-499 / JS614)</name>
    <dbReference type="NCBI Taxonomy" id="196162"/>
    <lineage>
        <taxon>Bacteria</taxon>
        <taxon>Bacillati</taxon>
        <taxon>Actinomycetota</taxon>
        <taxon>Actinomycetes</taxon>
        <taxon>Propionibacteriales</taxon>
        <taxon>Nocardioidaceae</taxon>
        <taxon>Nocardioides</taxon>
    </lineage>
</organism>
<accession>A1SPL0</accession>
<keyword id="KW-0012">Acyltransferase</keyword>
<keyword id="KW-1185">Reference proteome</keyword>
<keyword id="KW-0677">Repeat</keyword>
<keyword id="KW-0808">Transferase</keyword>
<proteinExistence type="inferred from homology"/>
<sequence length="295" mass="30832">MDDHAADLLAAVAEVARAAEAADGAAPLDEATWLALRHHPERVRSWVRAGGFALVIGADLSLVVHPQARGRGLGAGLLSSALAGLSAGMPLEAWSHGDHPAAAALARSHGFERARELWVMRRQMASALPQLRAPDGVTVRAFRADSGDAEEVLRVNAAAFAHHPEQGSMDATNLAERMAEPWFDPDGLLLATSAAADGGEQVLGFHWTKVHPGDAGAGAGPGVEVGEVYVVGIDPAAQGRGLGKVLTLAGLHHLAGRGVPEVLLYVESDNRPAIAVYAGLGFTHADDDTHVQYRR</sequence>
<evidence type="ECO:0000255" key="1">
    <source>
        <dbReference type="HAMAP-Rule" id="MF_01698"/>
    </source>
</evidence>
<reference key="1">
    <citation type="submission" date="2006-12" db="EMBL/GenBank/DDBJ databases">
        <title>Complete sequence of chromosome 1 of Nocardioides sp. JS614.</title>
        <authorList>
            <person name="Copeland A."/>
            <person name="Lucas S."/>
            <person name="Lapidus A."/>
            <person name="Barry K."/>
            <person name="Detter J.C."/>
            <person name="Glavina del Rio T."/>
            <person name="Hammon N."/>
            <person name="Israni S."/>
            <person name="Dalin E."/>
            <person name="Tice H."/>
            <person name="Pitluck S."/>
            <person name="Thompson L.S."/>
            <person name="Brettin T."/>
            <person name="Bruce D."/>
            <person name="Han C."/>
            <person name="Tapia R."/>
            <person name="Schmutz J."/>
            <person name="Larimer F."/>
            <person name="Land M."/>
            <person name="Hauser L."/>
            <person name="Kyrpides N."/>
            <person name="Kim E."/>
            <person name="Mattes T."/>
            <person name="Gossett J."/>
            <person name="Richardson P."/>
        </authorList>
    </citation>
    <scope>NUCLEOTIDE SEQUENCE [LARGE SCALE GENOMIC DNA]</scope>
    <source>
        <strain>ATCC BAA-499 / JS614</strain>
    </source>
</reference>
<name>MSHD_NOCSJ</name>
<comment type="function">
    <text evidence="1">Catalyzes the transfer of acetyl from acetyl-CoA to desacetylmycothiol (Cys-GlcN-Ins) to form mycothiol.</text>
</comment>
<comment type="catalytic activity">
    <reaction evidence="1">
        <text>1D-myo-inositol 2-(L-cysteinylamino)-2-deoxy-alpha-D-glucopyranoside + acetyl-CoA = mycothiol + CoA + H(+)</text>
        <dbReference type="Rhea" id="RHEA:26172"/>
        <dbReference type="ChEBI" id="CHEBI:15378"/>
        <dbReference type="ChEBI" id="CHEBI:16768"/>
        <dbReference type="ChEBI" id="CHEBI:57287"/>
        <dbReference type="ChEBI" id="CHEBI:57288"/>
        <dbReference type="ChEBI" id="CHEBI:58887"/>
        <dbReference type="EC" id="2.3.1.189"/>
    </reaction>
</comment>
<comment type="subunit">
    <text evidence="1">Monomer.</text>
</comment>
<comment type="similarity">
    <text evidence="1">Belongs to the acetyltransferase family. MshD subfamily.</text>
</comment>